<organism>
    <name type="scientific">Escherichia coli (strain K12)</name>
    <dbReference type="NCBI Taxonomy" id="83333"/>
    <lineage>
        <taxon>Bacteria</taxon>
        <taxon>Pseudomonadati</taxon>
        <taxon>Pseudomonadota</taxon>
        <taxon>Gammaproteobacteria</taxon>
        <taxon>Enterobacterales</taxon>
        <taxon>Enterobacteriaceae</taxon>
        <taxon>Escherichia</taxon>
    </lineage>
</organism>
<gene>
    <name type="primary">ibsE</name>
    <name type="ordered locus">b4666</name>
    <name type="ordered locus">JW3023.2</name>
</gene>
<reference key="1">
    <citation type="journal article" date="1997" name="Science">
        <title>The complete genome sequence of Escherichia coli K-12.</title>
        <authorList>
            <person name="Blattner F.R."/>
            <person name="Plunkett G. III"/>
            <person name="Bloch C.A."/>
            <person name="Perna N.T."/>
            <person name="Burland V."/>
            <person name="Riley M."/>
            <person name="Collado-Vides J."/>
            <person name="Glasner J.D."/>
            <person name="Rode C.K."/>
            <person name="Mayhew G.F."/>
            <person name="Gregor J."/>
            <person name="Davis N.W."/>
            <person name="Kirkpatrick H.A."/>
            <person name="Goeden M.A."/>
            <person name="Rose D.J."/>
            <person name="Mau B."/>
            <person name="Shao Y."/>
        </authorList>
    </citation>
    <scope>NUCLEOTIDE SEQUENCE [LARGE SCALE GENOMIC DNA]</scope>
    <source>
        <strain>K12 / MG1655 / ATCC 47076</strain>
    </source>
</reference>
<reference key="2">
    <citation type="journal article" date="2006" name="Mol. Syst. Biol.">
        <title>Highly accurate genome sequences of Escherichia coli K-12 strains MG1655 and W3110.</title>
        <authorList>
            <person name="Hayashi K."/>
            <person name="Morooka N."/>
            <person name="Yamamoto Y."/>
            <person name="Fujita K."/>
            <person name="Isono K."/>
            <person name="Choi S."/>
            <person name="Ohtsubo E."/>
            <person name="Baba T."/>
            <person name="Wanner B.L."/>
            <person name="Mori H."/>
            <person name="Horiuchi T."/>
        </authorList>
    </citation>
    <scope>NUCLEOTIDE SEQUENCE [LARGE SCALE GENOMIC DNA]</scope>
    <source>
        <strain>K12 / W3110 / ATCC 27325 / DSM 5911</strain>
    </source>
</reference>
<reference key="3">
    <citation type="journal article" date="2008" name="Mol. Microbiol.">
        <title>Repression of small toxic protein synthesis by the Sib and OhsC small RNAs.</title>
        <authorList>
            <person name="Fozo E.M."/>
            <person name="Kawano M."/>
            <person name="Fontaine F."/>
            <person name="Kaya Y."/>
            <person name="Mendieta K.S."/>
            <person name="Jones K.L."/>
            <person name="Ocampo A."/>
            <person name="Rudd K.E."/>
            <person name="Storz G."/>
        </authorList>
    </citation>
    <scope>IDENTIFICATION</scope>
    <scope>FUNCTION</scope>
    <scope>OVEREXPRESSION</scope>
    <scope>DISRUPTION PHENOTYPE</scope>
    <source>
        <strain>K12 / MG1655 / ATCC 47076</strain>
    </source>
</reference>
<dbReference type="EMBL" id="U00096">
    <property type="protein sequence ID" value="ACO60009.1"/>
    <property type="molecule type" value="Genomic_DNA"/>
</dbReference>
<dbReference type="EMBL" id="AP009048">
    <property type="status" value="NOT_ANNOTATED_CDS"/>
    <property type="molecule type" value="Genomic_DNA"/>
</dbReference>
<dbReference type="RefSeq" id="WP_010723221.1">
    <property type="nucleotide sequence ID" value="NZ_SSZK01000028.1"/>
</dbReference>
<dbReference type="RefSeq" id="YP_002791257.1">
    <property type="nucleotide sequence ID" value="NC_000913.3"/>
</dbReference>
<dbReference type="EnsemblBacteria" id="ACO60009">
    <property type="protein sequence ID" value="ACO60009"/>
    <property type="gene ID" value="b4666"/>
</dbReference>
<dbReference type="GeneID" id="75173173"/>
<dbReference type="GeneID" id="7751629"/>
<dbReference type="KEGG" id="eco:b4666"/>
<dbReference type="InParanoid" id="C1P617"/>
<dbReference type="BioCyc" id="EcoCyc:MONOMER0-2855"/>
<dbReference type="PRO" id="PR:C1P617"/>
<dbReference type="Proteomes" id="UP000000625">
    <property type="component" value="Chromosome"/>
</dbReference>
<dbReference type="GO" id="GO:0012501">
    <property type="term" value="P:programmed cell death"/>
    <property type="evidence" value="ECO:0000315"/>
    <property type="project" value="EcoCyc"/>
</dbReference>
<dbReference type="InterPro" id="IPR025881">
    <property type="entry name" value="Toxin_Ibs"/>
</dbReference>
<dbReference type="Pfam" id="PF13956">
    <property type="entry name" value="Ibs_toxin"/>
    <property type="match status" value="1"/>
</dbReference>
<accession>C1P617</accession>
<evidence type="ECO:0000269" key="1">
    <source>
    </source>
</evidence>
<evidence type="ECO:0000305" key="2"/>
<proteinExistence type="evidence at transcript level"/>
<sequence length="19" mass="2207">MMKLVIILVVLLLLSFPTY</sequence>
<protein>
    <recommendedName>
        <fullName>Small toxic protein IbsE</fullName>
    </recommendedName>
</protein>
<name>IBSE_ECOLI</name>
<feature type="chain" id="PRO_0000386424" description="Small toxic protein IbsE">
    <location>
        <begin position="1"/>
        <end position="19"/>
    </location>
</feature>
<comment type="function">
    <text evidence="1">Toxic component of a type I toxin-antitoxin (TA) system. Overexpression causes cessation of growth.</text>
</comment>
<comment type="induction">
    <text>The sibE sRNA probably represses expression of ibsE mRNA, either by destabilizing the transcript and/or preventing its translation. Expression of the proteinaceous toxin is controlled by antisense sRNA SibE.</text>
</comment>
<comment type="disruption phenotype">
    <text evidence="1">None seen. An isbE overproducing strain cannot be made in the absence of the sibE gene.</text>
</comment>
<comment type="miscellaneous">
    <text>Part of the SIBe repeat region, encoded on the opposite strand from the sibE RNA.</text>
</comment>
<comment type="similarity">
    <text evidence="2">Belongs to the Ibs toxic protein family.</text>
</comment>
<keyword id="KW-1185">Reference proteome</keyword>
<keyword id="KW-1277">Toxin-antitoxin system</keyword>